<feature type="chain" id="PRO_0000375695" description="Succinyl-diaminopimelate desuccinylase">
    <location>
        <begin position="1"/>
        <end position="386"/>
    </location>
</feature>
<feature type="active site" evidence="1">
    <location>
        <position position="74"/>
    </location>
</feature>
<feature type="active site" description="Proton acceptor" evidence="1">
    <location>
        <position position="139"/>
    </location>
</feature>
<feature type="binding site" evidence="1">
    <location>
        <position position="72"/>
    </location>
    <ligand>
        <name>Zn(2+)</name>
        <dbReference type="ChEBI" id="CHEBI:29105"/>
        <label>1</label>
    </ligand>
</feature>
<feature type="binding site" evidence="1">
    <location>
        <position position="105"/>
    </location>
    <ligand>
        <name>Zn(2+)</name>
        <dbReference type="ChEBI" id="CHEBI:29105"/>
        <label>1</label>
    </ligand>
</feature>
<feature type="binding site" evidence="1">
    <location>
        <position position="105"/>
    </location>
    <ligand>
        <name>Zn(2+)</name>
        <dbReference type="ChEBI" id="CHEBI:29105"/>
        <label>2</label>
    </ligand>
</feature>
<feature type="binding site" evidence="1">
    <location>
        <position position="140"/>
    </location>
    <ligand>
        <name>Zn(2+)</name>
        <dbReference type="ChEBI" id="CHEBI:29105"/>
        <label>2</label>
    </ligand>
</feature>
<feature type="binding site" evidence="1">
    <location>
        <position position="168"/>
    </location>
    <ligand>
        <name>Zn(2+)</name>
        <dbReference type="ChEBI" id="CHEBI:29105"/>
        <label>1</label>
    </ligand>
</feature>
<feature type="binding site" evidence="1">
    <location>
        <position position="353"/>
    </location>
    <ligand>
        <name>Zn(2+)</name>
        <dbReference type="ChEBI" id="CHEBI:29105"/>
        <label>2</label>
    </ligand>
</feature>
<comment type="function">
    <text evidence="1">Catalyzes the hydrolysis of N-succinyl-L,L-diaminopimelic acid (SDAP), forming succinate and LL-2,6-diaminopimelate (DAP), an intermediate involved in the bacterial biosynthesis of lysine and meso-diaminopimelic acid, an essential component of bacterial cell walls.</text>
</comment>
<comment type="catalytic activity">
    <reaction evidence="1">
        <text>N-succinyl-(2S,6S)-2,6-diaminopimelate + H2O = (2S,6S)-2,6-diaminopimelate + succinate</text>
        <dbReference type="Rhea" id="RHEA:22608"/>
        <dbReference type="ChEBI" id="CHEBI:15377"/>
        <dbReference type="ChEBI" id="CHEBI:30031"/>
        <dbReference type="ChEBI" id="CHEBI:57609"/>
        <dbReference type="ChEBI" id="CHEBI:58087"/>
        <dbReference type="EC" id="3.5.1.18"/>
    </reaction>
</comment>
<comment type="cofactor">
    <cofactor evidence="1">
        <name>Zn(2+)</name>
        <dbReference type="ChEBI" id="CHEBI:29105"/>
    </cofactor>
    <cofactor evidence="1">
        <name>Co(2+)</name>
        <dbReference type="ChEBI" id="CHEBI:48828"/>
    </cofactor>
    <text evidence="1">Binds 2 Zn(2+) or Co(2+) ions per subunit.</text>
</comment>
<comment type="pathway">
    <text evidence="1">Amino-acid biosynthesis; L-lysine biosynthesis via DAP pathway; LL-2,6-diaminopimelate from (S)-tetrahydrodipicolinate (succinylase route): step 3/3.</text>
</comment>
<comment type="subunit">
    <text evidence="1">Homodimer.</text>
</comment>
<comment type="similarity">
    <text evidence="1">Belongs to the peptidase M20A family. DapE subfamily.</text>
</comment>
<organism>
    <name type="scientific">Rhodospirillum centenum (strain ATCC 51521 / SW)</name>
    <dbReference type="NCBI Taxonomy" id="414684"/>
    <lineage>
        <taxon>Bacteria</taxon>
        <taxon>Pseudomonadati</taxon>
        <taxon>Pseudomonadota</taxon>
        <taxon>Alphaproteobacteria</taxon>
        <taxon>Rhodospirillales</taxon>
        <taxon>Rhodospirillaceae</taxon>
        <taxon>Rhodospirillum</taxon>
    </lineage>
</organism>
<keyword id="KW-0028">Amino-acid biosynthesis</keyword>
<keyword id="KW-0170">Cobalt</keyword>
<keyword id="KW-0220">Diaminopimelate biosynthesis</keyword>
<keyword id="KW-0378">Hydrolase</keyword>
<keyword id="KW-0457">Lysine biosynthesis</keyword>
<keyword id="KW-0479">Metal-binding</keyword>
<keyword id="KW-1185">Reference proteome</keyword>
<keyword id="KW-0862">Zinc</keyword>
<accession>B6IPH8</accession>
<protein>
    <recommendedName>
        <fullName evidence="1">Succinyl-diaminopimelate desuccinylase</fullName>
        <shortName evidence="1">SDAP desuccinylase</shortName>
        <ecNumber evidence="1">3.5.1.18</ecNumber>
    </recommendedName>
    <alternativeName>
        <fullName evidence="1">N-succinyl-LL-2,6-diaminoheptanedioate amidohydrolase</fullName>
    </alternativeName>
</protein>
<name>DAPE_RHOCS</name>
<proteinExistence type="inferred from homology"/>
<gene>
    <name evidence="1" type="primary">dapE</name>
    <name type="ordered locus">RC1_2293</name>
</gene>
<sequence length="386" mass="40454">MAPDPIALARDLIRCPSVTPADAGALDRVQSVLEGLGFTCHRLPFQEPGTERVDNLYARLGDKGPNFCFAGHTDVVPAGDAAAWTVDPFGGEIIDGRLYGRGAADMKGGVAAFIAAVGSFLERNGPPAGSISLLITGDEEGPAVNGTRKVLDWMAAAGERIDACLVGEPTNPRALGDMIKVGRRGSLTATLTALGAQGHTAYPHLADNPLPRLAEALHLLASSPLDMGTPHFQPSTLALTSIDVGNPASNVIPARGTARFNIRFNDLHTPESLEAHIRDVLEEVGGAWELALQTSGVAFLTPPGALSDIVAAAVEAHTGRTPELSTSGGTSDARFIKDHCPVVEFGLVGASMHKVDENVAVADLLELTAIYRTVLERWFAGAEPRT</sequence>
<evidence type="ECO:0000255" key="1">
    <source>
        <dbReference type="HAMAP-Rule" id="MF_01690"/>
    </source>
</evidence>
<reference key="1">
    <citation type="submission" date="2007-03" db="EMBL/GenBank/DDBJ databases">
        <title>Genome sequence of Rhodospirillum centenum.</title>
        <authorList>
            <person name="Touchman J.W."/>
            <person name="Bauer C."/>
            <person name="Blankenship R.E."/>
        </authorList>
    </citation>
    <scope>NUCLEOTIDE SEQUENCE [LARGE SCALE GENOMIC DNA]</scope>
    <source>
        <strain>ATCC 51521 / SW</strain>
    </source>
</reference>
<dbReference type="EC" id="3.5.1.18" evidence="1"/>
<dbReference type="EMBL" id="CP000613">
    <property type="protein sequence ID" value="ACI99680.1"/>
    <property type="molecule type" value="Genomic_DNA"/>
</dbReference>
<dbReference type="RefSeq" id="WP_012567465.1">
    <property type="nucleotide sequence ID" value="NC_011420.2"/>
</dbReference>
<dbReference type="SMR" id="B6IPH8"/>
<dbReference type="STRING" id="414684.RC1_2293"/>
<dbReference type="KEGG" id="rce:RC1_2293"/>
<dbReference type="eggNOG" id="COG0624">
    <property type="taxonomic scope" value="Bacteria"/>
</dbReference>
<dbReference type="HOGENOM" id="CLU_021802_4_0_5"/>
<dbReference type="OrthoDB" id="9809784at2"/>
<dbReference type="UniPathway" id="UPA00034">
    <property type="reaction ID" value="UER00021"/>
</dbReference>
<dbReference type="Proteomes" id="UP000001591">
    <property type="component" value="Chromosome"/>
</dbReference>
<dbReference type="GO" id="GO:0008777">
    <property type="term" value="F:acetylornithine deacetylase activity"/>
    <property type="evidence" value="ECO:0007669"/>
    <property type="project" value="TreeGrafter"/>
</dbReference>
<dbReference type="GO" id="GO:0050897">
    <property type="term" value="F:cobalt ion binding"/>
    <property type="evidence" value="ECO:0007669"/>
    <property type="project" value="UniProtKB-UniRule"/>
</dbReference>
<dbReference type="GO" id="GO:0009014">
    <property type="term" value="F:succinyl-diaminopimelate desuccinylase activity"/>
    <property type="evidence" value="ECO:0007669"/>
    <property type="project" value="UniProtKB-UniRule"/>
</dbReference>
<dbReference type="GO" id="GO:0008270">
    <property type="term" value="F:zinc ion binding"/>
    <property type="evidence" value="ECO:0007669"/>
    <property type="project" value="UniProtKB-UniRule"/>
</dbReference>
<dbReference type="GO" id="GO:0019877">
    <property type="term" value="P:diaminopimelate biosynthetic process"/>
    <property type="evidence" value="ECO:0007669"/>
    <property type="project" value="UniProtKB-UniRule"/>
</dbReference>
<dbReference type="GO" id="GO:0006526">
    <property type="term" value="P:L-arginine biosynthetic process"/>
    <property type="evidence" value="ECO:0007669"/>
    <property type="project" value="TreeGrafter"/>
</dbReference>
<dbReference type="GO" id="GO:0009089">
    <property type="term" value="P:lysine biosynthetic process via diaminopimelate"/>
    <property type="evidence" value="ECO:0007669"/>
    <property type="project" value="UniProtKB-UniRule"/>
</dbReference>
<dbReference type="CDD" id="cd03891">
    <property type="entry name" value="M20_DapE_proteobac"/>
    <property type="match status" value="1"/>
</dbReference>
<dbReference type="Gene3D" id="3.40.630.10">
    <property type="entry name" value="Zn peptidases"/>
    <property type="match status" value="2"/>
</dbReference>
<dbReference type="HAMAP" id="MF_01690">
    <property type="entry name" value="DapE"/>
    <property type="match status" value="1"/>
</dbReference>
<dbReference type="InterPro" id="IPR001261">
    <property type="entry name" value="ArgE/DapE_CS"/>
</dbReference>
<dbReference type="InterPro" id="IPR036264">
    <property type="entry name" value="Bact_exopeptidase_dim_dom"/>
</dbReference>
<dbReference type="InterPro" id="IPR005941">
    <property type="entry name" value="DapE_proteobac"/>
</dbReference>
<dbReference type="InterPro" id="IPR002933">
    <property type="entry name" value="Peptidase_M20"/>
</dbReference>
<dbReference type="InterPro" id="IPR011650">
    <property type="entry name" value="Peptidase_M20_dimer"/>
</dbReference>
<dbReference type="InterPro" id="IPR050072">
    <property type="entry name" value="Peptidase_M20A"/>
</dbReference>
<dbReference type="NCBIfam" id="TIGR01246">
    <property type="entry name" value="dapE_proteo"/>
    <property type="match status" value="1"/>
</dbReference>
<dbReference type="NCBIfam" id="NF009557">
    <property type="entry name" value="PRK13009.1"/>
    <property type="match status" value="1"/>
</dbReference>
<dbReference type="PANTHER" id="PTHR43808">
    <property type="entry name" value="ACETYLORNITHINE DEACETYLASE"/>
    <property type="match status" value="1"/>
</dbReference>
<dbReference type="PANTHER" id="PTHR43808:SF31">
    <property type="entry name" value="N-ACETYL-L-CITRULLINE DEACETYLASE"/>
    <property type="match status" value="1"/>
</dbReference>
<dbReference type="Pfam" id="PF07687">
    <property type="entry name" value="M20_dimer"/>
    <property type="match status" value="1"/>
</dbReference>
<dbReference type="Pfam" id="PF01546">
    <property type="entry name" value="Peptidase_M20"/>
    <property type="match status" value="1"/>
</dbReference>
<dbReference type="SUPFAM" id="SSF55031">
    <property type="entry name" value="Bacterial exopeptidase dimerisation domain"/>
    <property type="match status" value="1"/>
</dbReference>
<dbReference type="SUPFAM" id="SSF53187">
    <property type="entry name" value="Zn-dependent exopeptidases"/>
    <property type="match status" value="1"/>
</dbReference>
<dbReference type="PROSITE" id="PS00759">
    <property type="entry name" value="ARGE_DAPE_CPG2_2"/>
    <property type="match status" value="1"/>
</dbReference>